<name>AOR_PYRHO</name>
<protein>
    <recommendedName>
        <fullName evidence="1">Tungsten-containing aldehyde ferredoxin oxidoreductase</fullName>
        <ecNumber evidence="1">1.2.7.5</ecNumber>
    </recommendedName>
</protein>
<comment type="catalytic activity">
    <reaction evidence="1">
        <text>an aldehyde + 2 oxidized [2Fe-2S]-[ferredoxin] + H2O = a carboxylate + 2 reduced [2Fe-2S]-[ferredoxin] + 3 H(+)</text>
        <dbReference type="Rhea" id="RHEA:16421"/>
        <dbReference type="Rhea" id="RHEA-COMP:10000"/>
        <dbReference type="Rhea" id="RHEA-COMP:10001"/>
        <dbReference type="ChEBI" id="CHEBI:15377"/>
        <dbReference type="ChEBI" id="CHEBI:15378"/>
        <dbReference type="ChEBI" id="CHEBI:17478"/>
        <dbReference type="ChEBI" id="CHEBI:29067"/>
        <dbReference type="ChEBI" id="CHEBI:33737"/>
        <dbReference type="ChEBI" id="CHEBI:33738"/>
        <dbReference type="EC" id="1.2.7.5"/>
    </reaction>
</comment>
<comment type="cofactor">
    <cofactor evidence="1">
        <name>[4Fe-4S] cluster</name>
        <dbReference type="ChEBI" id="CHEBI:49883"/>
    </cofactor>
    <text evidence="1">Binds 1 [4Fe-4S] cluster per subunit.</text>
</comment>
<comment type="cofactor">
    <cofactor evidence="1">
        <name>tungstopterin</name>
        <dbReference type="ChEBI" id="CHEBI:30402"/>
    </cofactor>
    <text evidence="1">Binds 1 tungstopterin cofactor per subunit.</text>
</comment>
<comment type="subunit">
    <text evidence="1">Homodimer.</text>
</comment>
<comment type="similarity">
    <text evidence="2">Belongs to the AOR/FOR family.</text>
</comment>
<evidence type="ECO:0000250" key="1">
    <source>
        <dbReference type="UniProtKB" id="Q51739"/>
    </source>
</evidence>
<evidence type="ECO:0000305" key="2"/>
<reference key="1">
    <citation type="journal article" date="1998" name="DNA Res.">
        <title>Complete sequence and gene organization of the genome of a hyper-thermophilic archaebacterium, Pyrococcus horikoshii OT3.</title>
        <authorList>
            <person name="Kawarabayasi Y."/>
            <person name="Sawada M."/>
            <person name="Horikawa H."/>
            <person name="Haikawa Y."/>
            <person name="Hino Y."/>
            <person name="Yamamoto S."/>
            <person name="Sekine M."/>
            <person name="Baba S."/>
            <person name="Kosugi H."/>
            <person name="Hosoyama A."/>
            <person name="Nagai Y."/>
            <person name="Sakai M."/>
            <person name="Ogura K."/>
            <person name="Otsuka R."/>
            <person name="Nakazawa H."/>
            <person name="Takamiya M."/>
            <person name="Ohfuku Y."/>
            <person name="Funahashi T."/>
            <person name="Tanaka T."/>
            <person name="Kudoh Y."/>
            <person name="Yamazaki J."/>
            <person name="Kushida N."/>
            <person name="Oguchi A."/>
            <person name="Aoki K."/>
            <person name="Yoshizawa T."/>
            <person name="Nakamura Y."/>
            <person name="Robb F.T."/>
            <person name="Horikoshi K."/>
            <person name="Masuchi Y."/>
            <person name="Shizuya H."/>
            <person name="Kikuchi H."/>
        </authorList>
    </citation>
    <scope>NUCLEOTIDE SEQUENCE [LARGE SCALE GENOMIC DNA]</scope>
    <source>
        <strain>ATCC 700860 / DSM 12428 / JCM 9974 / NBRC 100139 / OT-3</strain>
    </source>
</reference>
<dbReference type="EC" id="1.2.7.5" evidence="1"/>
<dbReference type="EMBL" id="BA000001">
    <property type="protein sequence ID" value="BAA30116.1"/>
    <property type="molecule type" value="Genomic_DNA"/>
</dbReference>
<dbReference type="PIR" id="F71094">
    <property type="entry name" value="F71094"/>
</dbReference>
<dbReference type="RefSeq" id="WP_010885106.1">
    <property type="nucleotide sequence ID" value="NC_000961.1"/>
</dbReference>
<dbReference type="SMR" id="O58778"/>
<dbReference type="STRING" id="70601.gene:9377976"/>
<dbReference type="EnsemblBacteria" id="BAA30116">
    <property type="protein sequence ID" value="BAA30116"/>
    <property type="gene ID" value="BAA30116"/>
</dbReference>
<dbReference type="GeneID" id="1443341"/>
<dbReference type="KEGG" id="pho:PH1019"/>
<dbReference type="eggNOG" id="arCOG00706">
    <property type="taxonomic scope" value="Archaea"/>
</dbReference>
<dbReference type="OrthoDB" id="30771at2157"/>
<dbReference type="Proteomes" id="UP000000752">
    <property type="component" value="Chromosome"/>
</dbReference>
<dbReference type="GO" id="GO:0051539">
    <property type="term" value="F:4 iron, 4 sulfur cluster binding"/>
    <property type="evidence" value="ECO:0007669"/>
    <property type="project" value="UniProtKB-KW"/>
</dbReference>
<dbReference type="GO" id="GO:0033726">
    <property type="term" value="F:aldehyde ferredoxin oxidoreductase activity"/>
    <property type="evidence" value="ECO:0007669"/>
    <property type="project" value="UniProtKB-EC"/>
</dbReference>
<dbReference type="GO" id="GO:0009055">
    <property type="term" value="F:electron transfer activity"/>
    <property type="evidence" value="ECO:0007669"/>
    <property type="project" value="InterPro"/>
</dbReference>
<dbReference type="GO" id="GO:0046872">
    <property type="term" value="F:metal ion binding"/>
    <property type="evidence" value="ECO:0007669"/>
    <property type="project" value="UniProtKB-KW"/>
</dbReference>
<dbReference type="Gene3D" id="1.10.569.10">
    <property type="entry name" value="Aldehyde Ferredoxin Oxidoreductase Protein, subunit A, domain 2"/>
    <property type="match status" value="1"/>
</dbReference>
<dbReference type="Gene3D" id="1.10.599.10">
    <property type="entry name" value="Aldehyde Ferredoxin Oxidoreductase Protein, subunit A, domain 3"/>
    <property type="match status" value="1"/>
</dbReference>
<dbReference type="Gene3D" id="3.60.9.10">
    <property type="entry name" value="Aldehyde ferredoxin oxidoreductase, N-terminal domain"/>
    <property type="match status" value="1"/>
</dbReference>
<dbReference type="InterPro" id="IPR013984">
    <property type="entry name" value="Ald_Fedxn_OxRdtase_dom2"/>
</dbReference>
<dbReference type="InterPro" id="IPR013985">
    <property type="entry name" value="Ald_Fedxn_OxRdtase_dom3"/>
</dbReference>
<dbReference type="InterPro" id="IPR013983">
    <property type="entry name" value="Ald_Fedxn_OxRdtase_N"/>
</dbReference>
<dbReference type="InterPro" id="IPR036503">
    <property type="entry name" value="Ald_Fedxn_OxRdtase_N_sf"/>
</dbReference>
<dbReference type="InterPro" id="IPR001203">
    <property type="entry name" value="OxRdtase_Ald_Fedxn_C"/>
</dbReference>
<dbReference type="InterPro" id="IPR036021">
    <property type="entry name" value="Tungsten_al_ferr_oxy-like_C"/>
</dbReference>
<dbReference type="InterPro" id="IPR051919">
    <property type="entry name" value="W-dependent_AOR"/>
</dbReference>
<dbReference type="PANTHER" id="PTHR30038">
    <property type="entry name" value="ALDEHYDE FERREDOXIN OXIDOREDUCTASE"/>
    <property type="match status" value="1"/>
</dbReference>
<dbReference type="PANTHER" id="PTHR30038:SF0">
    <property type="entry name" value="TUNGSTEN-CONTAINING ALDEHYDE FERREDOXIN OXIDOREDUCTASE"/>
    <property type="match status" value="1"/>
</dbReference>
<dbReference type="Pfam" id="PF01314">
    <property type="entry name" value="AFOR_C"/>
    <property type="match status" value="1"/>
</dbReference>
<dbReference type="Pfam" id="PF02730">
    <property type="entry name" value="AFOR_N"/>
    <property type="match status" value="1"/>
</dbReference>
<dbReference type="SMART" id="SM00790">
    <property type="entry name" value="AFOR_N"/>
    <property type="match status" value="1"/>
</dbReference>
<dbReference type="SUPFAM" id="SSF48310">
    <property type="entry name" value="Aldehyde ferredoxin oxidoreductase, C-terminal domains"/>
    <property type="match status" value="1"/>
</dbReference>
<dbReference type="SUPFAM" id="SSF56228">
    <property type="entry name" value="Aldehyde ferredoxin oxidoreductase, N-terminal domain"/>
    <property type="match status" value="1"/>
</dbReference>
<organism>
    <name type="scientific">Pyrococcus horikoshii (strain ATCC 700860 / DSM 12428 / JCM 9974 / NBRC 100139 / OT-3)</name>
    <dbReference type="NCBI Taxonomy" id="70601"/>
    <lineage>
        <taxon>Archaea</taxon>
        <taxon>Methanobacteriati</taxon>
        <taxon>Methanobacteriota</taxon>
        <taxon>Thermococci</taxon>
        <taxon>Thermococcales</taxon>
        <taxon>Thermococcaceae</taxon>
        <taxon>Pyrococcus</taxon>
    </lineage>
</organism>
<gene>
    <name type="primary">aor</name>
    <name type="ordered locus">PH1019</name>
</gene>
<feature type="chain" id="PRO_0000064607" description="Tungsten-containing aldehyde ferredoxin oxidoreductase">
    <location>
        <begin position="1"/>
        <end position="607"/>
    </location>
</feature>
<feature type="binding site" evidence="1">
    <location>
        <position position="76"/>
    </location>
    <ligand>
        <name>tungstopterin</name>
        <dbReference type="ChEBI" id="CHEBI:30402"/>
    </ligand>
</feature>
<feature type="binding site" evidence="1">
    <location>
        <position position="93"/>
    </location>
    <ligand>
        <name>tungstopterin</name>
        <dbReference type="ChEBI" id="CHEBI:30402"/>
    </ligand>
</feature>
<feature type="binding site" evidence="1">
    <location>
        <position position="95"/>
    </location>
    <ligand>
        <name>tungstopterin</name>
        <dbReference type="ChEBI" id="CHEBI:30402"/>
    </ligand>
</feature>
<feature type="binding site" evidence="1">
    <location>
        <position position="182"/>
    </location>
    <ligand>
        <name>tungstopterin</name>
        <dbReference type="ChEBI" id="CHEBI:30402"/>
    </ligand>
</feature>
<feature type="binding site" evidence="1">
    <location>
        <position position="183"/>
    </location>
    <ligand>
        <name>tungstopterin</name>
        <dbReference type="ChEBI" id="CHEBI:30402"/>
    </ligand>
</feature>
<feature type="binding site" evidence="1">
    <location>
        <position position="185"/>
    </location>
    <ligand>
        <name>tungstopterin</name>
        <dbReference type="ChEBI" id="CHEBI:30402"/>
    </ligand>
</feature>
<feature type="binding site" evidence="1">
    <location>
        <position position="186"/>
    </location>
    <ligand>
        <name>tungstopterin</name>
        <dbReference type="ChEBI" id="CHEBI:30402"/>
    </ligand>
</feature>
<feature type="binding site" evidence="1">
    <location>
        <position position="288"/>
    </location>
    <ligand>
        <name>[4Fe-4S] cluster</name>
        <dbReference type="ChEBI" id="CHEBI:49883"/>
    </ligand>
</feature>
<feature type="binding site" evidence="1">
    <location>
        <position position="291"/>
    </location>
    <ligand>
        <name>[4Fe-4S] cluster</name>
        <dbReference type="ChEBI" id="CHEBI:49883"/>
    </ligand>
</feature>
<feature type="binding site" evidence="1">
    <location>
        <position position="295"/>
    </location>
    <ligand>
        <name>[4Fe-4S] cluster</name>
        <dbReference type="ChEBI" id="CHEBI:49883"/>
    </ligand>
</feature>
<feature type="binding site" evidence="1">
    <location>
        <position position="338"/>
    </location>
    <ligand>
        <name>tungstopterin</name>
        <dbReference type="ChEBI" id="CHEBI:30402"/>
    </ligand>
</feature>
<feature type="binding site" evidence="1">
    <location>
        <position position="343"/>
    </location>
    <ligand>
        <name>tungstopterin</name>
        <dbReference type="ChEBI" id="CHEBI:30402"/>
    </ligand>
</feature>
<feature type="binding site" evidence="1">
    <location>
        <position position="446"/>
    </location>
    <ligand>
        <name>tungstopterin</name>
        <dbReference type="ChEBI" id="CHEBI:30402"/>
    </ligand>
</feature>
<feature type="binding site" evidence="1">
    <location>
        <position position="452"/>
    </location>
    <ligand>
        <name>tungstopterin</name>
        <dbReference type="ChEBI" id="CHEBI:30402"/>
    </ligand>
</feature>
<feature type="binding site" evidence="1">
    <location>
        <position position="491"/>
    </location>
    <ligand>
        <name>tungstopterin</name>
        <dbReference type="ChEBI" id="CHEBI:30402"/>
    </ligand>
</feature>
<feature type="binding site" evidence="1">
    <location>
        <position position="495"/>
    </location>
    <ligand>
        <name>tungstopterin</name>
        <dbReference type="ChEBI" id="CHEBI:30402"/>
    </ligand>
</feature>
<feature type="binding site" evidence="1">
    <location>
        <position position="496"/>
    </location>
    <ligand>
        <name>[4Fe-4S] cluster</name>
        <dbReference type="ChEBI" id="CHEBI:49883"/>
    </ligand>
</feature>
<feature type="binding site" evidence="1">
    <location>
        <position position="497"/>
    </location>
    <ligand>
        <name>tungstopterin</name>
        <dbReference type="ChEBI" id="CHEBI:30402"/>
    </ligand>
</feature>
<sequence length="607" mass="67537">MFGYWGKILRVNLSDGTIKEETFNEEFAKKWLGTRGFGIYFLLKEMDPKIDPFSPENKLIFATGPLTGTSAPTGGRYMVITKSPLTGYIAMANSGGYFGAELKFAGWDAIIVEGKADHPVYIYINDENVEIRDASKVWGKLVSETERMLKEEVGDKHVQIASIGPAGENKVRFAAVMNNGHRAAGRGGVGAVMGSKNLKAIVVRGHKRVEVADKGKFMEVIREKIEKLRKDPVAGGGLPKYGTAVLVNIINEHGLYPTRNFQTGVFKYAYEQSGEAMAAKYLVRNKPCFACPIGCGRVNYLPSIGETEGPEYESTWALGANLGINDLASIIEANHFADEYGMDTISLGGTLATAMELYERGLIKQEDIGGENEPPFRFGNTEVLHYWIHKIAKREGFGDILAEGGYRLAEKFNGLEYFMGVKKQELPAYDPRGAEGHGLGYATNNRGGCHIKQYMISPEILGYPYKMDPHDISDEKVKMVILFQDLTAVIDAAGLCIFTTFGLGADDYTDMLNAALGWDFSTDDYLKIGERIWNAERLFNLKAGLDPLKEDTLPKRFLEEPMPEGPNKGHVVRLKEMLPRYYKLRGWTEDGRIPEEKLKELGLEEFM</sequence>
<proteinExistence type="inferred from homology"/>
<keyword id="KW-0004">4Fe-4S</keyword>
<keyword id="KW-0408">Iron</keyword>
<keyword id="KW-0411">Iron-sulfur</keyword>
<keyword id="KW-0479">Metal-binding</keyword>
<keyword id="KW-0560">Oxidoreductase</keyword>
<keyword id="KW-0826">Tungsten</keyword>
<accession>O58778</accession>